<accession>Q9XPS6</accession>
<gene>
    <name evidence="1" type="primary">psbM</name>
</gene>
<organism>
    <name type="scientific">Triticum aestivum</name>
    <name type="common">Wheat</name>
    <dbReference type="NCBI Taxonomy" id="4565"/>
    <lineage>
        <taxon>Eukaryota</taxon>
        <taxon>Viridiplantae</taxon>
        <taxon>Streptophyta</taxon>
        <taxon>Embryophyta</taxon>
        <taxon>Tracheophyta</taxon>
        <taxon>Spermatophyta</taxon>
        <taxon>Magnoliopsida</taxon>
        <taxon>Liliopsida</taxon>
        <taxon>Poales</taxon>
        <taxon>Poaceae</taxon>
        <taxon>BOP clade</taxon>
        <taxon>Pooideae</taxon>
        <taxon>Triticodae</taxon>
        <taxon>Triticeae</taxon>
        <taxon>Triticinae</taxon>
        <taxon>Triticum</taxon>
    </lineage>
</organism>
<reference key="1">
    <citation type="submission" date="1999-05" db="EMBL/GenBank/DDBJ databases">
        <title>Molecular analysis of a 21.1-kb fragment of wheat chloroplast DNA bearing RNA polymerase subunit (rpo) genes.</title>
        <authorList>
            <person name="Matsuoka Y."/>
            <person name="Tsunewaki K."/>
            <person name="Ohnishi Y."/>
        </authorList>
    </citation>
    <scope>NUCLEOTIDE SEQUENCE [GENOMIC DNA]</scope>
    <source>
        <strain>cv. Chinese Spring</strain>
    </source>
</reference>
<reference key="2">
    <citation type="journal article" date="2000" name="Plant Mol. Biol. Rep.">
        <title>Chinese spring wheat (Triticum aestivum L.) chloroplast genome: complete sequence and contig clones.</title>
        <authorList>
            <person name="Ogihara Y."/>
            <person name="Isono K."/>
            <person name="Kojima T."/>
            <person name="Endo A."/>
            <person name="Hanaoka M."/>
            <person name="Shiina T."/>
            <person name="Terachi T."/>
            <person name="Utsugi S."/>
            <person name="Murata M."/>
            <person name="Mori N."/>
            <person name="Takumi S."/>
            <person name="Ikeo K."/>
            <person name="Gojobori T."/>
            <person name="Murai R."/>
            <person name="Murai K."/>
            <person name="Matsuoka Y."/>
            <person name="Ohnishi Y."/>
            <person name="Tajiri H."/>
            <person name="Tsunewaki K."/>
        </authorList>
    </citation>
    <scope>NUCLEOTIDE SEQUENCE [LARGE SCALE GENOMIC DNA]</scope>
    <source>
        <strain>cv. Chinese Spring</strain>
    </source>
</reference>
<keyword id="KW-0150">Chloroplast</keyword>
<keyword id="KW-0472">Membrane</keyword>
<keyword id="KW-0602">Photosynthesis</keyword>
<keyword id="KW-0604">Photosystem II</keyword>
<keyword id="KW-0934">Plastid</keyword>
<keyword id="KW-0674">Reaction center</keyword>
<keyword id="KW-1185">Reference proteome</keyword>
<keyword id="KW-0793">Thylakoid</keyword>
<keyword id="KW-0812">Transmembrane</keyword>
<keyword id="KW-1133">Transmembrane helix</keyword>
<evidence type="ECO:0000255" key="1">
    <source>
        <dbReference type="HAMAP-Rule" id="MF_00438"/>
    </source>
</evidence>
<geneLocation type="chloroplast"/>
<name>PSBM_WHEAT</name>
<dbReference type="EMBL" id="AB027572">
    <property type="protein sequence ID" value="BAA78038.1"/>
    <property type="molecule type" value="Genomic_DNA"/>
</dbReference>
<dbReference type="EMBL" id="AB042240">
    <property type="protein sequence ID" value="BAB47022.1"/>
    <property type="molecule type" value="Genomic_DNA"/>
</dbReference>
<dbReference type="RefSeq" id="NP_114247.1">
    <property type="nucleotide sequence ID" value="NC_002762.1"/>
</dbReference>
<dbReference type="SMR" id="Q9XPS6"/>
<dbReference type="STRING" id="4565.Q9XPS6"/>
<dbReference type="PaxDb" id="4565-EPlTAEP00000010049"/>
<dbReference type="EnsemblPlants" id="TraesCAD_scaffold_1017813_01G000100.1">
    <property type="protein sequence ID" value="TraesCAD_scaffold_1017813_01G000100.1"/>
    <property type="gene ID" value="TraesCAD_scaffold_1017813_01G000100"/>
</dbReference>
<dbReference type="EnsemblPlants" id="TraesCAD_scaffold_1043206_01G000100.1">
    <property type="protein sequence ID" value="TraesCAD_scaffold_1043206_01G000100.1"/>
    <property type="gene ID" value="TraesCAD_scaffold_1043206_01G000100"/>
</dbReference>
<dbReference type="EnsemblPlants" id="TraesCAD_scaffold_1050597_01G000100.1">
    <property type="protein sequence ID" value="TraesCAD_scaffold_1050597_01G000100.1"/>
    <property type="gene ID" value="TraesCAD_scaffold_1050597_01G000100"/>
</dbReference>
<dbReference type="EnsemblPlants" id="TraesCAD_scaffold_234690_01G000200.1">
    <property type="protein sequence ID" value="TraesCAD_scaffold_234690_01G000200.1"/>
    <property type="gene ID" value="TraesCAD_scaffold_234690_01G000200"/>
</dbReference>
<dbReference type="EnsemblPlants" id="TraesCAD_scaffold_272341_01G000100.1">
    <property type="protein sequence ID" value="TraesCAD_scaffold_272341_01G000100.1"/>
    <property type="gene ID" value="TraesCAD_scaffold_272341_01G000100"/>
</dbReference>
<dbReference type="EnsemblPlants" id="TraesCLE_scaffold_1046472_01G000100.1">
    <property type="protein sequence ID" value="TraesCLE_scaffold_1046472_01G000100.1"/>
    <property type="gene ID" value="TraesCLE_scaffold_1046472_01G000100"/>
</dbReference>
<dbReference type="EnsemblPlants" id="TraesCS1D02G180500.1">
    <property type="protein sequence ID" value="TraesCS1D02G180500.1.cds1"/>
    <property type="gene ID" value="TraesCS1D02G180500"/>
</dbReference>
<dbReference type="EnsemblPlants" id="TraesCS1D03G0463800.1">
    <property type="protein sequence ID" value="TraesCS1D03G0463800.1.CDS1"/>
    <property type="gene ID" value="TraesCS1D03G0463800"/>
</dbReference>
<dbReference type="EnsemblPlants" id="TraesCS2D02G573200.1">
    <property type="protein sequence ID" value="TraesCS2D02G573200.1.cds1"/>
    <property type="gene ID" value="TraesCS2D02G573200"/>
</dbReference>
<dbReference type="EnsemblPlants" id="TraesCS2D03G1328400.1">
    <property type="protein sequence ID" value="TraesCS2D03G1328400.1.CDS1"/>
    <property type="gene ID" value="TraesCS2D03G1328400"/>
</dbReference>
<dbReference type="EnsemblPlants" id="TraesCS3B02G563300.1">
    <property type="protein sequence ID" value="TraesCS3B02G563300.1.cds1"/>
    <property type="gene ID" value="TraesCS3B02G563300"/>
</dbReference>
<dbReference type="EnsemblPlants" id="TraesCS3B03G1407300.1">
    <property type="protein sequence ID" value="TraesCS3B03G1407300.1.CDS1"/>
    <property type="gene ID" value="TraesCS3B03G1407300"/>
</dbReference>
<dbReference type="EnsemblPlants" id="TraesCS5D02G007700.1">
    <property type="protein sequence ID" value="TraesCS5D02G007700.1.cds1"/>
    <property type="gene ID" value="TraesCS5D02G007700"/>
</dbReference>
<dbReference type="EnsemblPlants" id="TraesCS5D02G458400.1">
    <property type="protein sequence ID" value="TraesCS5D02G458400.1.cds1"/>
    <property type="gene ID" value="TraesCS5D02G458400"/>
</dbReference>
<dbReference type="EnsemblPlants" id="TraesCS5D03G0022300.1">
    <property type="protein sequence ID" value="TraesCS5D03G0022300.1.CDS1"/>
    <property type="gene ID" value="TraesCS5D03G0022300"/>
</dbReference>
<dbReference type="EnsemblPlants" id="TraesCS5D03G1012600.1">
    <property type="protein sequence ID" value="TraesCS5D03G1012600.1.CDS1"/>
    <property type="gene ID" value="TraesCS5D03G1012600"/>
</dbReference>
<dbReference type="EnsemblPlants" id="TraesJAG1D03G00483070.1">
    <property type="protein sequence ID" value="TraesJAG1D03G00483070.1.CDS1"/>
    <property type="gene ID" value="TraesJAG1D03G00483070"/>
</dbReference>
<dbReference type="EnsemblPlants" id="TraesLAC1D03G00487130.1">
    <property type="protein sequence ID" value="TraesLAC1D03G00487130.1.CDS1"/>
    <property type="gene ID" value="TraesLAC1D03G00487130"/>
</dbReference>
<dbReference type="EnsemblPlants" id="TraesLAC3B03G01719000.1">
    <property type="protein sequence ID" value="TraesLAC3B03G01719000.1.CDS1"/>
    <property type="gene ID" value="TraesLAC3B03G01719000"/>
</dbReference>
<dbReference type="EnsemblPlants" id="TraesMAC3B03G01777270.1">
    <property type="protein sequence ID" value="TraesMAC3B03G01777270.1.CDS1"/>
    <property type="gene ID" value="TraesMAC3B03G01777270"/>
</dbReference>
<dbReference type="EnsemblPlants" id="TraesMACUn03G04635700.1">
    <property type="protein sequence ID" value="TraesMACUn03G04635700.1.CDS1"/>
    <property type="gene ID" value="TraesMACUn03G04635700"/>
</dbReference>
<dbReference type="EnsemblPlants" id="TraesNOR1D03G00491250.1">
    <property type="protein sequence ID" value="TraesNOR1D03G00491250.1.CDS1"/>
    <property type="gene ID" value="TraesNOR1D03G00491250"/>
</dbReference>
<dbReference type="EnsemblPlants" id="TraesNOR3B03G01802190.1">
    <property type="protein sequence ID" value="TraesNOR3B03G01802190.1.CDS1"/>
    <property type="gene ID" value="TraesNOR3B03G01802190"/>
</dbReference>
<dbReference type="EnsemblPlants" id="TraesNOR5D03G03231060.1">
    <property type="protein sequence ID" value="TraesNOR5D03G03231060.1.CDS1"/>
    <property type="gene ID" value="TraesNOR5D03G03231060"/>
</dbReference>
<dbReference type="EnsemblPlants" id="TraesPARA_EIv1.0_1763090.1">
    <property type="protein sequence ID" value="TraesPARA_EIv1.0_1763090.1.CDS1"/>
    <property type="gene ID" value="TraesPARA_EIv1.0_1763090"/>
</dbReference>
<dbReference type="EnsemblPlants" id="TraesPARA_EIv1.0_2055120.1">
    <property type="protein sequence ID" value="TraesPARA_EIv1.0_2055120.1.CDS1"/>
    <property type="gene ID" value="TraesPARA_EIv1.0_2055120"/>
</dbReference>
<dbReference type="EnsemblPlants" id="TraesPARA_EIv1.0_2055690.1">
    <property type="protein sequence ID" value="TraesPARA_EIv1.0_2055690.1.CDS1"/>
    <property type="gene ID" value="TraesPARA_EIv1.0_2055690"/>
</dbReference>
<dbReference type="EnsemblPlants" id="TraesPARA_EIv1.0_2233300.1">
    <property type="protein sequence ID" value="TraesPARA_EIv1.0_2233300.1.CDS1"/>
    <property type="gene ID" value="TraesPARA_EIv1.0_2233300"/>
</dbReference>
<dbReference type="EnsemblPlants" id="TraesPARA_EIv1.0_2644140.1">
    <property type="protein sequence ID" value="TraesPARA_EIv1.0_2644140.1.CDS1"/>
    <property type="gene ID" value="TraesPARA_EIv1.0_2644140"/>
</dbReference>
<dbReference type="EnsemblPlants" id="TraesPARA_EIv1.0_2680530.1">
    <property type="protein sequence ID" value="TraesPARA_EIv1.0_2680530.1.CDS1"/>
    <property type="gene ID" value="TraesPARA_EIv1.0_2680530"/>
</dbReference>
<dbReference type="EnsemblPlants" id="TraesRN1D0100493800.1">
    <property type="protein sequence ID" value="TraesRN1D0100493800.1"/>
    <property type="gene ID" value="TraesRN1D0100493800"/>
</dbReference>
<dbReference type="EnsemblPlants" id="TraesRN1D0100493900.1">
    <property type="protein sequence ID" value="TraesRN1D0100493900.1"/>
    <property type="gene ID" value="TraesRN1D0100493900"/>
</dbReference>
<dbReference type="EnsemblPlants" id="TraesRN1D0100494000.1">
    <property type="protein sequence ID" value="TraesRN1D0100494000.1"/>
    <property type="gene ID" value="TraesRN1D0100494000"/>
</dbReference>
<dbReference type="EnsemblPlants" id="TraesRN1D0100494100.1">
    <property type="protein sequence ID" value="TraesRN1D0100494100.1"/>
    <property type="gene ID" value="TraesRN1D0100494100"/>
</dbReference>
<dbReference type="EnsemblPlants" id="TraesRN1D0100567100.1">
    <property type="protein sequence ID" value="TraesRN1D0100567100.1"/>
    <property type="gene ID" value="TraesRN1D0100567100"/>
</dbReference>
<dbReference type="EnsemblPlants" id="TraesRN4B0100430900.1">
    <property type="protein sequence ID" value="TraesRN4B0100430900.1"/>
    <property type="gene ID" value="TraesRN4B0100430900"/>
</dbReference>
<dbReference type="EnsemblPlants" id="TraesRN5A0100057000.1">
    <property type="protein sequence ID" value="TraesRN5A0100057000.1"/>
    <property type="gene ID" value="TraesRN5A0100057000"/>
</dbReference>
<dbReference type="EnsemblPlants" id="TraesRN5D0100023900.1">
    <property type="protein sequence ID" value="TraesRN5D0100023900.1"/>
    <property type="gene ID" value="TraesRN5D0100023900"/>
</dbReference>
<dbReference type="EnsemblPlants" id="TraesROB_scaffold_497457_01G000100.1">
    <property type="protein sequence ID" value="TraesROB_scaffold_497457_01G000100.1"/>
    <property type="gene ID" value="TraesROB_scaffold_497457_01G000100"/>
</dbReference>
<dbReference type="EnsemblPlants" id="TraesSYM3B03G01800910.1">
    <property type="protein sequence ID" value="TraesSYM3B03G01800910.1.CDS1"/>
    <property type="gene ID" value="TraesSYM3B03G01800910"/>
</dbReference>
<dbReference type="EnsemblPlants" id="TraesWEE_scaffold_037274_01G000300.1">
    <property type="protein sequence ID" value="TraesWEE_scaffold_037274_01G000300.1"/>
    <property type="gene ID" value="TraesWEE_scaffold_037274_01G000300"/>
</dbReference>
<dbReference type="EnsemblPlants" id="TraesWEE_scaffold_097910_01G000600.1">
    <property type="protein sequence ID" value="TraesWEE_scaffold_097910_01G000600.1"/>
    <property type="gene ID" value="TraesWEE_scaffold_097910_01G000600"/>
</dbReference>
<dbReference type="EnsemblPlants" id="TraesWEE_scaffold_349041_01G000100.1">
    <property type="protein sequence ID" value="TraesWEE_scaffold_349041_01G000100.1"/>
    <property type="gene ID" value="TraesWEE_scaffold_349041_01G000100"/>
</dbReference>
<dbReference type="EnsemblPlants" id="TraesWEE_scaffold_626402_01G000200.1">
    <property type="protein sequence ID" value="TraesWEE_scaffold_626402_01G000200.1"/>
    <property type="gene ID" value="TraesWEE_scaffold_626402_01G000200"/>
</dbReference>
<dbReference type="EnsemblPlants" id="TraesWEE_scaffold_933152_01G000100.1">
    <property type="protein sequence ID" value="TraesWEE_scaffold_933152_01G000100.1"/>
    <property type="gene ID" value="TraesWEE_scaffold_933152_01G000100"/>
</dbReference>
<dbReference type="GeneID" id="803142"/>
<dbReference type="Gramene" id="TraesCAD_scaffold_1017813_01G000100.1">
    <property type="protein sequence ID" value="TraesCAD_scaffold_1017813_01G000100.1"/>
    <property type="gene ID" value="TraesCAD_scaffold_1017813_01G000100"/>
</dbReference>
<dbReference type="Gramene" id="TraesCAD_scaffold_1043206_01G000100.1">
    <property type="protein sequence ID" value="TraesCAD_scaffold_1043206_01G000100.1"/>
    <property type="gene ID" value="TraesCAD_scaffold_1043206_01G000100"/>
</dbReference>
<dbReference type="Gramene" id="TraesCAD_scaffold_1050597_01G000100.1">
    <property type="protein sequence ID" value="TraesCAD_scaffold_1050597_01G000100.1"/>
    <property type="gene ID" value="TraesCAD_scaffold_1050597_01G000100"/>
</dbReference>
<dbReference type="Gramene" id="TraesCAD_scaffold_234690_01G000200.1">
    <property type="protein sequence ID" value="TraesCAD_scaffold_234690_01G000200.1"/>
    <property type="gene ID" value="TraesCAD_scaffold_234690_01G000200"/>
</dbReference>
<dbReference type="Gramene" id="TraesCAD_scaffold_272341_01G000100.1">
    <property type="protein sequence ID" value="TraesCAD_scaffold_272341_01G000100.1"/>
    <property type="gene ID" value="TraesCAD_scaffold_272341_01G000100"/>
</dbReference>
<dbReference type="Gramene" id="TraesCLE_scaffold_1046472_01G000100.1">
    <property type="protein sequence ID" value="TraesCLE_scaffold_1046472_01G000100.1"/>
    <property type="gene ID" value="TraesCLE_scaffold_1046472_01G000100"/>
</dbReference>
<dbReference type="Gramene" id="TraesCS1D02G180500.1">
    <property type="protein sequence ID" value="TraesCS1D02G180500.1.cds1"/>
    <property type="gene ID" value="TraesCS1D02G180500"/>
</dbReference>
<dbReference type="Gramene" id="TraesCS1D03G0463800.1">
    <property type="protein sequence ID" value="TraesCS1D03G0463800.1.CDS1"/>
    <property type="gene ID" value="TraesCS1D03G0463800"/>
</dbReference>
<dbReference type="Gramene" id="TraesCS2D02G573200.1">
    <property type="protein sequence ID" value="TraesCS2D02G573200.1.cds1"/>
    <property type="gene ID" value="TraesCS2D02G573200"/>
</dbReference>
<dbReference type="Gramene" id="TraesCS2D03G1328400.1">
    <property type="protein sequence ID" value="TraesCS2D03G1328400.1.CDS1"/>
    <property type="gene ID" value="TraesCS2D03G1328400"/>
</dbReference>
<dbReference type="Gramene" id="TraesCS3B02G563300.1">
    <property type="protein sequence ID" value="TraesCS3B02G563300.1.cds1"/>
    <property type="gene ID" value="TraesCS3B02G563300"/>
</dbReference>
<dbReference type="Gramene" id="TraesCS3B03G1407300.1">
    <property type="protein sequence ID" value="TraesCS3B03G1407300.1.CDS1"/>
    <property type="gene ID" value="TraesCS3B03G1407300"/>
</dbReference>
<dbReference type="Gramene" id="TraesCS5D02G007700.1">
    <property type="protein sequence ID" value="TraesCS5D02G007700.1.cds1"/>
    <property type="gene ID" value="TraesCS5D02G007700"/>
</dbReference>
<dbReference type="Gramene" id="TraesCS5D02G458400.1">
    <property type="protein sequence ID" value="TraesCS5D02G458400.1.cds1"/>
    <property type="gene ID" value="TraesCS5D02G458400"/>
</dbReference>
<dbReference type="Gramene" id="TraesCS5D03G0022300.1">
    <property type="protein sequence ID" value="TraesCS5D03G0022300.1.CDS1"/>
    <property type="gene ID" value="TraesCS5D03G0022300"/>
</dbReference>
<dbReference type="Gramene" id="TraesCS5D03G1012600.1">
    <property type="protein sequence ID" value="TraesCS5D03G1012600.1.CDS1"/>
    <property type="gene ID" value="TraesCS5D03G1012600"/>
</dbReference>
<dbReference type="Gramene" id="TraesJAG1D03G00483070.1">
    <property type="protein sequence ID" value="TraesJAG1D03G00483070.1.CDS1"/>
    <property type="gene ID" value="TraesJAG1D03G00483070"/>
</dbReference>
<dbReference type="Gramene" id="TraesLAC1D03G00487130.1">
    <property type="protein sequence ID" value="TraesLAC1D03G00487130.1.CDS1"/>
    <property type="gene ID" value="TraesLAC1D03G00487130"/>
</dbReference>
<dbReference type="Gramene" id="TraesLAC3B03G01719000.1">
    <property type="protein sequence ID" value="TraesLAC3B03G01719000.1.CDS1"/>
    <property type="gene ID" value="TraesLAC3B03G01719000"/>
</dbReference>
<dbReference type="Gramene" id="TraesMAC3B03G01777270.1">
    <property type="protein sequence ID" value="TraesMAC3B03G01777270.1.CDS1"/>
    <property type="gene ID" value="TraesMAC3B03G01777270"/>
</dbReference>
<dbReference type="Gramene" id="TraesMACUn03G04635700.1">
    <property type="protein sequence ID" value="TraesMACUn03G04635700.1.CDS1"/>
    <property type="gene ID" value="TraesMACUn03G04635700"/>
</dbReference>
<dbReference type="Gramene" id="TraesNOR1D03G00491250.1">
    <property type="protein sequence ID" value="TraesNOR1D03G00491250.1.CDS1"/>
    <property type="gene ID" value="TraesNOR1D03G00491250"/>
</dbReference>
<dbReference type="Gramene" id="TraesNOR3B03G01802190.1">
    <property type="protein sequence ID" value="TraesNOR3B03G01802190.1.CDS1"/>
    <property type="gene ID" value="TraesNOR3B03G01802190"/>
</dbReference>
<dbReference type="Gramene" id="TraesNOR5D03G03231060.1">
    <property type="protein sequence ID" value="TraesNOR5D03G03231060.1.CDS1"/>
    <property type="gene ID" value="TraesNOR5D03G03231060"/>
</dbReference>
<dbReference type="Gramene" id="TraesPARA_EIv1.0_1763090.1">
    <property type="protein sequence ID" value="TraesPARA_EIv1.0_1763090.1.CDS1"/>
    <property type="gene ID" value="TraesPARA_EIv1.0_1763090"/>
</dbReference>
<dbReference type="Gramene" id="TraesPARA_EIv1.0_2055120.1">
    <property type="protein sequence ID" value="TraesPARA_EIv1.0_2055120.1.CDS1"/>
    <property type="gene ID" value="TraesPARA_EIv1.0_2055120"/>
</dbReference>
<dbReference type="Gramene" id="TraesPARA_EIv1.0_2055690.1">
    <property type="protein sequence ID" value="TraesPARA_EIv1.0_2055690.1.CDS1"/>
    <property type="gene ID" value="TraesPARA_EIv1.0_2055690"/>
</dbReference>
<dbReference type="Gramene" id="TraesPARA_EIv1.0_2233300.1">
    <property type="protein sequence ID" value="TraesPARA_EIv1.0_2233300.1.CDS1"/>
    <property type="gene ID" value="TraesPARA_EIv1.0_2233300"/>
</dbReference>
<dbReference type="Gramene" id="TraesPARA_EIv1.0_2644140.1">
    <property type="protein sequence ID" value="TraesPARA_EIv1.0_2644140.1.CDS1"/>
    <property type="gene ID" value="TraesPARA_EIv1.0_2644140"/>
</dbReference>
<dbReference type="Gramene" id="TraesPARA_EIv1.0_2680530.1">
    <property type="protein sequence ID" value="TraesPARA_EIv1.0_2680530.1.CDS1"/>
    <property type="gene ID" value="TraesPARA_EIv1.0_2680530"/>
</dbReference>
<dbReference type="Gramene" id="TraesRN1D0100493800.1">
    <property type="protein sequence ID" value="TraesRN1D0100493800.1"/>
    <property type="gene ID" value="TraesRN1D0100493800"/>
</dbReference>
<dbReference type="Gramene" id="TraesRN1D0100493900.1">
    <property type="protein sequence ID" value="TraesRN1D0100493900.1"/>
    <property type="gene ID" value="TraesRN1D0100493900"/>
</dbReference>
<dbReference type="Gramene" id="TraesRN1D0100494000.1">
    <property type="protein sequence ID" value="TraesRN1D0100494000.1"/>
    <property type="gene ID" value="TraesRN1D0100494000"/>
</dbReference>
<dbReference type="Gramene" id="TraesRN1D0100494100.1">
    <property type="protein sequence ID" value="TraesRN1D0100494100.1"/>
    <property type="gene ID" value="TraesRN1D0100494100"/>
</dbReference>
<dbReference type="Gramene" id="TraesRN1D0100567100.1">
    <property type="protein sequence ID" value="TraesRN1D0100567100.1"/>
    <property type="gene ID" value="TraesRN1D0100567100"/>
</dbReference>
<dbReference type="Gramene" id="TraesRN4B0100430900.1">
    <property type="protein sequence ID" value="TraesRN4B0100430900.1"/>
    <property type="gene ID" value="TraesRN4B0100430900"/>
</dbReference>
<dbReference type="Gramene" id="TraesRN5A0100057000.1">
    <property type="protein sequence ID" value="TraesRN5A0100057000.1"/>
    <property type="gene ID" value="TraesRN5A0100057000"/>
</dbReference>
<dbReference type="Gramene" id="TraesRN5D0100023900.1">
    <property type="protein sequence ID" value="TraesRN5D0100023900.1"/>
    <property type="gene ID" value="TraesRN5D0100023900"/>
</dbReference>
<dbReference type="Gramene" id="TraesROB_scaffold_497457_01G000100.1">
    <property type="protein sequence ID" value="TraesROB_scaffold_497457_01G000100.1"/>
    <property type="gene ID" value="TraesROB_scaffold_497457_01G000100"/>
</dbReference>
<dbReference type="Gramene" id="TraesSYM3B03G01800910.1">
    <property type="protein sequence ID" value="TraesSYM3B03G01800910.1.CDS1"/>
    <property type="gene ID" value="TraesSYM3B03G01800910"/>
</dbReference>
<dbReference type="Gramene" id="TraesWEE_scaffold_037274_01G000300.1">
    <property type="protein sequence ID" value="TraesWEE_scaffold_037274_01G000300.1"/>
    <property type="gene ID" value="TraesWEE_scaffold_037274_01G000300"/>
</dbReference>
<dbReference type="Gramene" id="TraesWEE_scaffold_097910_01G000600.1">
    <property type="protein sequence ID" value="TraesWEE_scaffold_097910_01G000600.1"/>
    <property type="gene ID" value="TraesWEE_scaffold_097910_01G000600"/>
</dbReference>
<dbReference type="Gramene" id="TraesWEE_scaffold_349041_01G000100.1">
    <property type="protein sequence ID" value="TraesWEE_scaffold_349041_01G000100.1"/>
    <property type="gene ID" value="TraesWEE_scaffold_349041_01G000100"/>
</dbReference>
<dbReference type="Gramene" id="TraesWEE_scaffold_626402_01G000200.1">
    <property type="protein sequence ID" value="TraesWEE_scaffold_626402_01G000200.1"/>
    <property type="gene ID" value="TraesWEE_scaffold_626402_01G000200"/>
</dbReference>
<dbReference type="Gramene" id="TraesWEE_scaffold_933152_01G000100.1">
    <property type="protein sequence ID" value="TraesWEE_scaffold_933152_01G000100.1"/>
    <property type="gene ID" value="TraesWEE_scaffold_933152_01G000100"/>
</dbReference>
<dbReference type="KEGG" id="taes:803142"/>
<dbReference type="eggNOG" id="ENOG502SD7U">
    <property type="taxonomic scope" value="Eukaryota"/>
</dbReference>
<dbReference type="HOGENOM" id="CLU_215415_1_0_1"/>
<dbReference type="OrthoDB" id="564131at2759"/>
<dbReference type="Proteomes" id="UP000019116">
    <property type="component" value="Chloroplast"/>
</dbReference>
<dbReference type="ExpressionAtlas" id="Q9XPS6">
    <property type="expression patterns" value="baseline"/>
</dbReference>
<dbReference type="GO" id="GO:0009535">
    <property type="term" value="C:chloroplast thylakoid membrane"/>
    <property type="evidence" value="ECO:0007669"/>
    <property type="project" value="UniProtKB-SubCell"/>
</dbReference>
<dbReference type="GO" id="GO:0009523">
    <property type="term" value="C:photosystem II"/>
    <property type="evidence" value="ECO:0007669"/>
    <property type="project" value="UniProtKB-KW"/>
</dbReference>
<dbReference type="GO" id="GO:0019684">
    <property type="term" value="P:photosynthesis, light reaction"/>
    <property type="evidence" value="ECO:0007669"/>
    <property type="project" value="InterPro"/>
</dbReference>
<dbReference type="HAMAP" id="MF_00438">
    <property type="entry name" value="PSII_PsbM"/>
    <property type="match status" value="1"/>
</dbReference>
<dbReference type="InterPro" id="IPR007826">
    <property type="entry name" value="PSII_PsbM"/>
</dbReference>
<dbReference type="InterPro" id="IPR037269">
    <property type="entry name" value="PSII_PsbM_sf"/>
</dbReference>
<dbReference type="NCBIfam" id="TIGR03038">
    <property type="entry name" value="PS_II_psbM"/>
    <property type="match status" value="1"/>
</dbReference>
<dbReference type="PANTHER" id="PTHR35774">
    <property type="entry name" value="PHOTOSYSTEM II REACTION CENTER PROTEIN M"/>
    <property type="match status" value="1"/>
</dbReference>
<dbReference type="PANTHER" id="PTHR35774:SF1">
    <property type="entry name" value="PHOTOSYSTEM II REACTION CENTER PROTEIN M"/>
    <property type="match status" value="1"/>
</dbReference>
<dbReference type="Pfam" id="PF05151">
    <property type="entry name" value="PsbM"/>
    <property type="match status" value="1"/>
</dbReference>
<dbReference type="SUPFAM" id="SSF161033">
    <property type="entry name" value="Photosystem II reaction center protein M, PsbM"/>
    <property type="match status" value="1"/>
</dbReference>
<comment type="function">
    <text evidence="1">One of the components of the core complex of photosystem II (PSII). PSII is a light-driven water:plastoquinone oxidoreductase that uses light energy to abstract electrons from H(2)O, generating O(2) and a proton gradient subsequently used for ATP formation. It consists of a core antenna complex that captures photons, and an electron transfer chain that converts photonic excitation into a charge separation. This subunit is found at the monomer-monomer interface.</text>
</comment>
<comment type="subunit">
    <text evidence="1">PSII is composed of 1 copy each of membrane proteins PsbA, PsbB, PsbC, PsbD, PsbE, PsbF, PsbH, PsbI, PsbJ, PsbK, PsbL, PsbM, PsbT, PsbX, PsbY, PsbZ, Psb30/Ycf12, at least 3 peripheral proteins of the oxygen-evolving complex and a large number of cofactors. It forms dimeric complexes.</text>
</comment>
<comment type="subcellular location">
    <subcellularLocation>
        <location evidence="1">Plastid</location>
        <location evidence="1">Chloroplast thylakoid membrane</location>
        <topology evidence="1">Single-pass membrane protein</topology>
    </subcellularLocation>
</comment>
<comment type="similarity">
    <text evidence="1">Belongs to the PsbM family.</text>
</comment>
<proteinExistence type="inferred from homology"/>
<protein>
    <recommendedName>
        <fullName evidence="1">Photosystem II reaction center protein M</fullName>
        <shortName evidence="1">PSII-M</shortName>
    </recommendedName>
</protein>
<feature type="chain" id="PRO_0000217580" description="Photosystem II reaction center protein M">
    <location>
        <begin position="1"/>
        <end position="34"/>
    </location>
</feature>
<feature type="transmembrane region" description="Helical" evidence="1">
    <location>
        <begin position="5"/>
        <end position="25"/>
    </location>
</feature>
<sequence length="34" mass="3798">MEVNILAFIATALFILVPTSFLLIIYVKTVSQNN</sequence>